<dbReference type="EMBL" id="CP000305">
    <property type="protein sequence ID" value="ABG19651.1"/>
    <property type="molecule type" value="Genomic_DNA"/>
</dbReference>
<dbReference type="EMBL" id="ACNQ01000017">
    <property type="protein sequence ID" value="EEO75841.1"/>
    <property type="molecule type" value="Genomic_DNA"/>
</dbReference>
<dbReference type="RefSeq" id="WP_002209122.1">
    <property type="nucleotide sequence ID" value="NZ_ACNQ01000017.1"/>
</dbReference>
<dbReference type="SMR" id="Q1CEC9"/>
<dbReference type="GeneID" id="57974262"/>
<dbReference type="KEGG" id="ypn:YPN_3324"/>
<dbReference type="HOGENOM" id="CLU_098807_3_0_6"/>
<dbReference type="Proteomes" id="UP000008936">
    <property type="component" value="Chromosome"/>
</dbReference>
<dbReference type="GO" id="GO:0005737">
    <property type="term" value="C:cytoplasm"/>
    <property type="evidence" value="ECO:0007669"/>
    <property type="project" value="UniProtKB-SubCell"/>
</dbReference>
<dbReference type="GO" id="GO:0005507">
    <property type="term" value="F:copper ion binding"/>
    <property type="evidence" value="ECO:0007669"/>
    <property type="project" value="UniProtKB-UniRule"/>
</dbReference>
<dbReference type="GO" id="GO:0010038">
    <property type="term" value="P:response to metal ion"/>
    <property type="evidence" value="ECO:0007669"/>
    <property type="project" value="InterPro"/>
</dbReference>
<dbReference type="FunFam" id="3.30.70.120:FF:000004">
    <property type="entry name" value="Divalent-cation tolerance protein CutA"/>
    <property type="match status" value="1"/>
</dbReference>
<dbReference type="Gene3D" id="3.30.70.120">
    <property type="match status" value="1"/>
</dbReference>
<dbReference type="HAMAP" id="MF_01160">
    <property type="entry name" value="CutA"/>
    <property type="match status" value="1"/>
</dbReference>
<dbReference type="InterPro" id="IPR023700">
    <property type="entry name" value="CutA_Enterobact"/>
</dbReference>
<dbReference type="InterPro" id="IPR004323">
    <property type="entry name" value="Ion_tolerance_CutA"/>
</dbReference>
<dbReference type="InterPro" id="IPR011322">
    <property type="entry name" value="N-reg_PII-like_a/b"/>
</dbReference>
<dbReference type="InterPro" id="IPR015867">
    <property type="entry name" value="N-reg_PII/ATP_PRibTrfase_C"/>
</dbReference>
<dbReference type="NCBIfam" id="NF007930">
    <property type="entry name" value="PRK10645.1"/>
    <property type="match status" value="1"/>
</dbReference>
<dbReference type="PANTHER" id="PTHR23419">
    <property type="entry name" value="DIVALENT CATION TOLERANCE CUTA-RELATED"/>
    <property type="match status" value="1"/>
</dbReference>
<dbReference type="PANTHER" id="PTHR23419:SF8">
    <property type="entry name" value="FI09726P"/>
    <property type="match status" value="1"/>
</dbReference>
<dbReference type="Pfam" id="PF03091">
    <property type="entry name" value="CutA1"/>
    <property type="match status" value="1"/>
</dbReference>
<dbReference type="SUPFAM" id="SSF54913">
    <property type="entry name" value="GlnB-like"/>
    <property type="match status" value="1"/>
</dbReference>
<organism>
    <name type="scientific">Yersinia pestis bv. Antiqua (strain Nepal516)</name>
    <dbReference type="NCBI Taxonomy" id="377628"/>
    <lineage>
        <taxon>Bacteria</taxon>
        <taxon>Pseudomonadati</taxon>
        <taxon>Pseudomonadota</taxon>
        <taxon>Gammaproteobacteria</taxon>
        <taxon>Enterobacterales</taxon>
        <taxon>Yersiniaceae</taxon>
        <taxon>Yersinia</taxon>
    </lineage>
</organism>
<name>CUTA_YERPN</name>
<accession>Q1CEC9</accession>
<accession>C4GY41</accession>
<sequence>MSDSDAMTDPNAVSYSNAIVVLCTAPDEASAQNLAAQVLGEKLAACVTLLPGATSLYYWEGKLEQEYEVQLLFKSNTDHQQALLTYIKQHHPYQTPELLVLPVRDGDKDYLSWLNASLL</sequence>
<keyword id="KW-0186">Copper</keyword>
<keyword id="KW-0963">Cytoplasm</keyword>
<keyword id="KW-0479">Metal-binding</keyword>
<gene>
    <name evidence="1" type="primary">cutA</name>
    <name type="ordered locus">YPN_3324</name>
    <name type="ORF">YP516_3779</name>
</gene>
<comment type="function">
    <text evidence="1">Involved in resistance toward heavy metals.</text>
</comment>
<comment type="cofactor">
    <cofactor evidence="1">
        <name>Cu cation</name>
        <dbReference type="ChEBI" id="CHEBI:23378"/>
    </cofactor>
    <text evidence="1">Binds 1 copper ion per subunit.</text>
</comment>
<comment type="subunit">
    <text evidence="1">Homotrimer.</text>
</comment>
<comment type="subcellular location">
    <subcellularLocation>
        <location evidence="1">Cytoplasm</location>
    </subcellularLocation>
</comment>
<comment type="similarity">
    <text evidence="1">Belongs to the CutA family.</text>
</comment>
<reference key="1">
    <citation type="journal article" date="2006" name="J. Bacteriol.">
        <title>Complete genome sequence of Yersinia pestis strains Antiqua and Nepal516: evidence of gene reduction in an emerging pathogen.</title>
        <authorList>
            <person name="Chain P.S.G."/>
            <person name="Hu P."/>
            <person name="Malfatti S.A."/>
            <person name="Radnedge L."/>
            <person name="Larimer F."/>
            <person name="Vergez L.M."/>
            <person name="Worsham P."/>
            <person name="Chu M.C."/>
            <person name="Andersen G.L."/>
        </authorList>
    </citation>
    <scope>NUCLEOTIDE SEQUENCE [LARGE SCALE GENOMIC DNA]</scope>
    <source>
        <strain>Nepal516</strain>
    </source>
</reference>
<reference key="2">
    <citation type="submission" date="2009-04" db="EMBL/GenBank/DDBJ databases">
        <title>Yersinia pestis Nepal516A whole genome shotgun sequencing project.</title>
        <authorList>
            <person name="Plunkett G. III"/>
            <person name="Anderson B.D."/>
            <person name="Baumler D.J."/>
            <person name="Burland V."/>
            <person name="Cabot E.L."/>
            <person name="Glasner J.D."/>
            <person name="Mau B."/>
            <person name="Neeno-Eckwall E."/>
            <person name="Perna N.T."/>
            <person name="Munk A.C."/>
            <person name="Tapia R."/>
            <person name="Green L.D."/>
            <person name="Rogers Y.C."/>
            <person name="Detter J.C."/>
            <person name="Bruce D.C."/>
            <person name="Brettin T.S."/>
        </authorList>
    </citation>
    <scope>NUCLEOTIDE SEQUENCE [LARGE SCALE GENOMIC DNA]</scope>
    <source>
        <strain>Nepal516</strain>
    </source>
</reference>
<proteinExistence type="inferred from homology"/>
<protein>
    <recommendedName>
        <fullName evidence="1">Divalent-cation tolerance protein CutA</fullName>
    </recommendedName>
</protein>
<evidence type="ECO:0000255" key="1">
    <source>
        <dbReference type="HAMAP-Rule" id="MF_01160"/>
    </source>
</evidence>
<feature type="chain" id="PRO_0000280490" description="Divalent-cation tolerance protein CutA">
    <location>
        <begin position="1"/>
        <end position="119"/>
    </location>
</feature>
<feature type="binding site" evidence="1">
    <location>
        <position position="23"/>
    </location>
    <ligand>
        <name>Cu cation</name>
        <dbReference type="ChEBI" id="CHEBI:23378"/>
    </ligand>
</feature>
<feature type="binding site" evidence="1">
    <location>
        <position position="90"/>
    </location>
    <ligand>
        <name>Cu cation</name>
        <dbReference type="ChEBI" id="CHEBI:23378"/>
    </ligand>
</feature>
<feature type="binding site" evidence="1">
    <location>
        <position position="91"/>
    </location>
    <ligand>
        <name>Cu cation</name>
        <dbReference type="ChEBI" id="CHEBI:23378"/>
    </ligand>
</feature>